<comment type="function">
    <text evidence="1">Peptide chain release factor 1 directs the termination of translation in response to the peptide chain termination codons UAG and UAA.</text>
</comment>
<comment type="subcellular location">
    <subcellularLocation>
        <location evidence="1">Cytoplasm</location>
    </subcellularLocation>
</comment>
<comment type="PTM">
    <text evidence="1">Methylated by PrmC. Methylation increases the termination efficiency of RF1.</text>
</comment>
<comment type="similarity">
    <text evidence="1">Belongs to the prokaryotic/mitochondrial release factor family.</text>
</comment>
<accession>A1U367</accession>
<name>RF1_MARN8</name>
<reference key="1">
    <citation type="journal article" date="2011" name="Appl. Environ. Microbiol.">
        <title>Genomic potential of Marinobacter aquaeolei, a biogeochemical 'opportunitroph'.</title>
        <authorList>
            <person name="Singer E."/>
            <person name="Webb E.A."/>
            <person name="Nelson W.C."/>
            <person name="Heidelberg J.F."/>
            <person name="Ivanova N."/>
            <person name="Pati A."/>
            <person name="Edwards K.J."/>
        </authorList>
    </citation>
    <scope>NUCLEOTIDE SEQUENCE [LARGE SCALE GENOMIC DNA]</scope>
    <source>
        <strain>ATCC 700491 / DSM 11845 / VT8</strain>
    </source>
</reference>
<proteinExistence type="inferred from homology"/>
<feature type="chain" id="PRO_1000004911" description="Peptide chain release factor 1">
    <location>
        <begin position="1"/>
        <end position="363"/>
    </location>
</feature>
<feature type="modified residue" description="N5-methylglutamine" evidence="1">
    <location>
        <position position="237"/>
    </location>
</feature>
<sequence>MKPSIQSRLEQLVERFEEVNALLSDASVIANQDKFRDLSREFAEIEPVVKCFQAWRQSLEDIDAATELAKDGDADMREMAEEELASARARSEELDEELQRLMLPKDPNDTKNVFLEIRAGTGGDEAAIFAGDLFRMYSRYAEKRRWQVEVLSENEGEHGGFKEIIARLSGDGVYGTLKFESGAHRVQRVPETESQGRIHTSACTVAVMPEADEAEAVEINKADLRVDTFRSSGAGGQHVNKTDSAIRITHLPTGIVVECQEERSQHKNRAKALSLLASRLQNAELEKQQKSMAETRKSLVGSGDRSERIRTYNFPQGRVTDHRINLTLYKLDEVIAGDLDAVVVPLQQEHQAELLADMANEQQ</sequence>
<protein>
    <recommendedName>
        <fullName evidence="1">Peptide chain release factor 1</fullName>
        <shortName evidence="1">RF-1</shortName>
    </recommendedName>
</protein>
<organism>
    <name type="scientific">Marinobacter nauticus (strain ATCC 700491 / DSM 11845 / VT8)</name>
    <name type="common">Marinobacter aquaeolei</name>
    <dbReference type="NCBI Taxonomy" id="351348"/>
    <lineage>
        <taxon>Bacteria</taxon>
        <taxon>Pseudomonadati</taxon>
        <taxon>Pseudomonadota</taxon>
        <taxon>Gammaproteobacteria</taxon>
        <taxon>Pseudomonadales</taxon>
        <taxon>Marinobacteraceae</taxon>
        <taxon>Marinobacter</taxon>
    </lineage>
</organism>
<dbReference type="EMBL" id="CP000514">
    <property type="protein sequence ID" value="ABM19436.1"/>
    <property type="molecule type" value="Genomic_DNA"/>
</dbReference>
<dbReference type="RefSeq" id="WP_011785823.1">
    <property type="nucleotide sequence ID" value="NC_008740.1"/>
</dbReference>
<dbReference type="SMR" id="A1U367"/>
<dbReference type="STRING" id="351348.Maqu_2360"/>
<dbReference type="KEGG" id="maq:Maqu_2360"/>
<dbReference type="eggNOG" id="COG0216">
    <property type="taxonomic scope" value="Bacteria"/>
</dbReference>
<dbReference type="HOGENOM" id="CLU_036856_0_1_6"/>
<dbReference type="OrthoDB" id="9806673at2"/>
<dbReference type="Proteomes" id="UP000000998">
    <property type="component" value="Chromosome"/>
</dbReference>
<dbReference type="GO" id="GO:0005737">
    <property type="term" value="C:cytoplasm"/>
    <property type="evidence" value="ECO:0007669"/>
    <property type="project" value="UniProtKB-SubCell"/>
</dbReference>
<dbReference type="GO" id="GO:0016149">
    <property type="term" value="F:translation release factor activity, codon specific"/>
    <property type="evidence" value="ECO:0007669"/>
    <property type="project" value="UniProtKB-UniRule"/>
</dbReference>
<dbReference type="FunFam" id="3.30.160.20:FF:000004">
    <property type="entry name" value="Peptide chain release factor 1"/>
    <property type="match status" value="1"/>
</dbReference>
<dbReference type="FunFam" id="3.30.70.1660:FF:000002">
    <property type="entry name" value="Peptide chain release factor 1"/>
    <property type="match status" value="1"/>
</dbReference>
<dbReference type="FunFam" id="3.30.70.1660:FF:000004">
    <property type="entry name" value="Peptide chain release factor 1"/>
    <property type="match status" value="1"/>
</dbReference>
<dbReference type="Gene3D" id="3.30.160.20">
    <property type="match status" value="1"/>
</dbReference>
<dbReference type="Gene3D" id="3.30.70.1660">
    <property type="match status" value="2"/>
</dbReference>
<dbReference type="Gene3D" id="6.10.140.1950">
    <property type="match status" value="1"/>
</dbReference>
<dbReference type="HAMAP" id="MF_00093">
    <property type="entry name" value="Rel_fac_1"/>
    <property type="match status" value="1"/>
</dbReference>
<dbReference type="InterPro" id="IPR005139">
    <property type="entry name" value="PCRF"/>
</dbReference>
<dbReference type="InterPro" id="IPR000352">
    <property type="entry name" value="Pep_chain_release_fac_I"/>
</dbReference>
<dbReference type="InterPro" id="IPR045853">
    <property type="entry name" value="Pep_chain_release_fac_I_sf"/>
</dbReference>
<dbReference type="InterPro" id="IPR050057">
    <property type="entry name" value="Prokaryotic/Mito_RF"/>
</dbReference>
<dbReference type="InterPro" id="IPR004373">
    <property type="entry name" value="RF-1"/>
</dbReference>
<dbReference type="NCBIfam" id="TIGR00019">
    <property type="entry name" value="prfA"/>
    <property type="match status" value="1"/>
</dbReference>
<dbReference type="NCBIfam" id="NF001859">
    <property type="entry name" value="PRK00591.1"/>
    <property type="match status" value="1"/>
</dbReference>
<dbReference type="PANTHER" id="PTHR43804">
    <property type="entry name" value="LD18447P"/>
    <property type="match status" value="1"/>
</dbReference>
<dbReference type="PANTHER" id="PTHR43804:SF7">
    <property type="entry name" value="LD18447P"/>
    <property type="match status" value="1"/>
</dbReference>
<dbReference type="Pfam" id="PF03462">
    <property type="entry name" value="PCRF"/>
    <property type="match status" value="1"/>
</dbReference>
<dbReference type="Pfam" id="PF00472">
    <property type="entry name" value="RF-1"/>
    <property type="match status" value="1"/>
</dbReference>
<dbReference type="SMART" id="SM00937">
    <property type="entry name" value="PCRF"/>
    <property type="match status" value="1"/>
</dbReference>
<dbReference type="SUPFAM" id="SSF75620">
    <property type="entry name" value="Release factor"/>
    <property type="match status" value="1"/>
</dbReference>
<dbReference type="PROSITE" id="PS00745">
    <property type="entry name" value="RF_PROK_I"/>
    <property type="match status" value="1"/>
</dbReference>
<keyword id="KW-0963">Cytoplasm</keyword>
<keyword id="KW-0488">Methylation</keyword>
<keyword id="KW-0648">Protein biosynthesis</keyword>
<evidence type="ECO:0000255" key="1">
    <source>
        <dbReference type="HAMAP-Rule" id="MF_00093"/>
    </source>
</evidence>
<gene>
    <name evidence="1" type="primary">prfA</name>
    <name type="ordered locus">Maqu_2360</name>
</gene>